<keyword id="KW-0169">Cobalamin biosynthesis</keyword>
<keyword id="KW-0315">Glutamine amidotransferase</keyword>
<proteinExistence type="inferred from homology"/>
<dbReference type="EMBL" id="CP001336">
    <property type="protein sequence ID" value="ACL19360.1"/>
    <property type="molecule type" value="Genomic_DNA"/>
</dbReference>
<dbReference type="RefSeq" id="WP_005812308.1">
    <property type="nucleotide sequence ID" value="NC_011830.1"/>
</dbReference>
<dbReference type="SMR" id="B8G242"/>
<dbReference type="KEGG" id="dhd:Dhaf_1304"/>
<dbReference type="HOGENOM" id="CLU_019250_2_2_9"/>
<dbReference type="UniPathway" id="UPA00148"/>
<dbReference type="Proteomes" id="UP000007726">
    <property type="component" value="Chromosome"/>
</dbReference>
<dbReference type="GO" id="GO:0015420">
    <property type="term" value="F:ABC-type vitamin B12 transporter activity"/>
    <property type="evidence" value="ECO:0007669"/>
    <property type="project" value="UniProtKB-UniRule"/>
</dbReference>
<dbReference type="GO" id="GO:0003824">
    <property type="term" value="F:catalytic activity"/>
    <property type="evidence" value="ECO:0007669"/>
    <property type="project" value="InterPro"/>
</dbReference>
<dbReference type="GO" id="GO:0009236">
    <property type="term" value="P:cobalamin biosynthetic process"/>
    <property type="evidence" value="ECO:0007669"/>
    <property type="project" value="UniProtKB-UniRule"/>
</dbReference>
<dbReference type="CDD" id="cd05389">
    <property type="entry name" value="CobQ_N"/>
    <property type="match status" value="1"/>
</dbReference>
<dbReference type="CDD" id="cd01750">
    <property type="entry name" value="GATase1_CobQ"/>
    <property type="match status" value="1"/>
</dbReference>
<dbReference type="Gene3D" id="3.40.50.880">
    <property type="match status" value="1"/>
</dbReference>
<dbReference type="Gene3D" id="3.40.50.300">
    <property type="entry name" value="P-loop containing nucleotide triphosphate hydrolases"/>
    <property type="match status" value="1"/>
</dbReference>
<dbReference type="HAMAP" id="MF_00028">
    <property type="entry name" value="CobQ"/>
    <property type="match status" value="1"/>
</dbReference>
<dbReference type="InterPro" id="IPR029062">
    <property type="entry name" value="Class_I_gatase-like"/>
</dbReference>
<dbReference type="InterPro" id="IPR002586">
    <property type="entry name" value="CobQ/CobB/MinD/ParA_Nub-bd_dom"/>
</dbReference>
<dbReference type="InterPro" id="IPR033949">
    <property type="entry name" value="CobQ_GATase1"/>
</dbReference>
<dbReference type="InterPro" id="IPR047045">
    <property type="entry name" value="CobQ_N"/>
</dbReference>
<dbReference type="InterPro" id="IPR004459">
    <property type="entry name" value="CobQ_synth"/>
</dbReference>
<dbReference type="InterPro" id="IPR011698">
    <property type="entry name" value="GATase_3"/>
</dbReference>
<dbReference type="InterPro" id="IPR027417">
    <property type="entry name" value="P-loop_NTPase"/>
</dbReference>
<dbReference type="NCBIfam" id="TIGR00313">
    <property type="entry name" value="cobQ"/>
    <property type="match status" value="1"/>
</dbReference>
<dbReference type="NCBIfam" id="NF001989">
    <property type="entry name" value="PRK00784.1"/>
    <property type="match status" value="1"/>
</dbReference>
<dbReference type="PANTHER" id="PTHR21343:SF1">
    <property type="entry name" value="COBYRIC ACID SYNTHASE"/>
    <property type="match status" value="1"/>
</dbReference>
<dbReference type="PANTHER" id="PTHR21343">
    <property type="entry name" value="DETHIOBIOTIN SYNTHETASE"/>
    <property type="match status" value="1"/>
</dbReference>
<dbReference type="Pfam" id="PF01656">
    <property type="entry name" value="CbiA"/>
    <property type="match status" value="1"/>
</dbReference>
<dbReference type="Pfam" id="PF07685">
    <property type="entry name" value="GATase_3"/>
    <property type="match status" value="1"/>
</dbReference>
<dbReference type="SUPFAM" id="SSF52317">
    <property type="entry name" value="Class I glutamine amidotransferase-like"/>
    <property type="match status" value="1"/>
</dbReference>
<dbReference type="SUPFAM" id="SSF52540">
    <property type="entry name" value="P-loop containing nucleoside triphosphate hydrolases"/>
    <property type="match status" value="1"/>
</dbReference>
<dbReference type="PROSITE" id="PS51274">
    <property type="entry name" value="GATASE_COBBQ"/>
    <property type="match status" value="1"/>
</dbReference>
<gene>
    <name evidence="1" type="primary">cobQ</name>
    <name type="ordered locus">Dhaf_1304</name>
</gene>
<reference key="1">
    <citation type="journal article" date="2012" name="BMC Microbiol.">
        <title>Genome sequence of Desulfitobacterium hafniense DCB-2, a Gram-positive anaerobe capable of dehalogenation and metal reduction.</title>
        <authorList>
            <person name="Kim S.H."/>
            <person name="Harzman C."/>
            <person name="Davis J.K."/>
            <person name="Hutcheson R."/>
            <person name="Broderick J.B."/>
            <person name="Marsh T.L."/>
            <person name="Tiedje J.M."/>
        </authorList>
    </citation>
    <scope>NUCLEOTIDE SEQUENCE [LARGE SCALE GENOMIC DNA]</scope>
    <source>
        <strain>DSM 10664 / DCB-2</strain>
    </source>
</reference>
<accession>B8G242</accession>
<name>COBQ_DESHD</name>
<comment type="function">
    <text evidence="1">Catalyzes amidations at positions B, D, E, and G on adenosylcobyrinic A,C-diamide. NH(2) groups are provided by glutamine, and one molecule of ATP is hydrogenolyzed for each amidation.</text>
</comment>
<comment type="pathway">
    <text evidence="1">Cofactor biosynthesis; adenosylcobalamin biosynthesis.</text>
</comment>
<comment type="similarity">
    <text evidence="1">Belongs to the CobB/CobQ family. CobQ subfamily.</text>
</comment>
<evidence type="ECO:0000255" key="1">
    <source>
        <dbReference type="HAMAP-Rule" id="MF_00028"/>
    </source>
</evidence>
<sequence>MSGKKAAARLMIQGTSSNVGKSVLAAAFCRIFYQEGYHVAPFKAQNMALNSFITRSGGEMGRAQVVQAQAAGLEPDVRMNPVLLKPTGHTGSQVIVLGKAQGTLSALKYHGDYQRKTWPIVEEALHELLEEHEIVVIEGAGSPAEVNLKQNDIVNMRVAKEAQAPVLLVADIDRGGALASVVGTLELLEPEERQLVQGIVMNKFRGDIKLLQPALDFLEERTGIPVVGVVPFYDQFKIPEEDSVVLEEQNTSKRDQGKSRDEALDVAVIRLPYLSNFTDFDPFEDEPDVILRYVREPSELGEPDCVIIPGSKNTLSDLRFLWESGLGEKIIKFWQEDVPIIGICGGYQMLGRIVRDPLGTESDLKEIAGLGILPMETEFELDKHTVQSRGKVVGGELFLARCQGTEITGYEIHMGRSQGEGHSLFEIEAQETAYGDGMSAGSAVGTYLHGIFDNDPLRTALLEWLWERRGGTRPVGETMSQAAIREQSFNELADWVRNSMDMEKIRAMMGLHKG</sequence>
<protein>
    <recommendedName>
        <fullName evidence="1">Cobyric acid synthase</fullName>
    </recommendedName>
</protein>
<feature type="chain" id="PRO_1000116905" description="Cobyric acid synthase">
    <location>
        <begin position="1"/>
        <end position="514"/>
    </location>
</feature>
<feature type="domain" description="GATase cobBQ-type" evidence="1">
    <location>
        <begin position="263"/>
        <end position="457"/>
    </location>
</feature>
<feature type="active site" description="Nucleophile" evidence="1">
    <location>
        <position position="344"/>
    </location>
</feature>
<feature type="active site" evidence="1">
    <location>
        <position position="449"/>
    </location>
</feature>
<organism>
    <name type="scientific">Desulfitobacterium hafniense (strain DSM 10664 / DCB-2)</name>
    <dbReference type="NCBI Taxonomy" id="272564"/>
    <lineage>
        <taxon>Bacteria</taxon>
        <taxon>Bacillati</taxon>
        <taxon>Bacillota</taxon>
        <taxon>Clostridia</taxon>
        <taxon>Eubacteriales</taxon>
        <taxon>Desulfitobacteriaceae</taxon>
        <taxon>Desulfitobacterium</taxon>
    </lineage>
</organism>